<comment type="subcellular location">
    <subcellularLocation>
        <location evidence="1">Mitochondrion</location>
    </subcellularLocation>
</comment>
<reference evidence="5" key="1">
    <citation type="journal article" date="2007" name="Science">
        <title>Genome sequence of Aedes aegypti, a major arbovirus vector.</title>
        <authorList>
            <person name="Nene V."/>
            <person name="Wortman J.R."/>
            <person name="Lawson D."/>
            <person name="Haas B.J."/>
            <person name="Kodira C.D."/>
            <person name="Tu Z.J."/>
            <person name="Loftus B.J."/>
            <person name="Xi Z."/>
            <person name="Megy K."/>
            <person name="Grabherr M."/>
            <person name="Ren Q."/>
            <person name="Zdobnov E.M."/>
            <person name="Lobo N.F."/>
            <person name="Campbell K.S."/>
            <person name="Brown S.E."/>
            <person name="Bonaldo M.F."/>
            <person name="Zhu J."/>
            <person name="Sinkins S.P."/>
            <person name="Hogenkamp D.G."/>
            <person name="Amedeo P."/>
            <person name="Arensburger P."/>
            <person name="Atkinson P.W."/>
            <person name="Bidwell S.L."/>
            <person name="Biedler J."/>
            <person name="Birney E."/>
            <person name="Bruggner R.V."/>
            <person name="Costas J."/>
            <person name="Coy M.R."/>
            <person name="Crabtree J."/>
            <person name="Crawford M."/>
            <person name="DeBruyn B."/>
            <person name="DeCaprio D."/>
            <person name="Eiglmeier K."/>
            <person name="Eisenstadt E."/>
            <person name="El-Dorry H."/>
            <person name="Gelbart W.M."/>
            <person name="Gomes S.L."/>
            <person name="Hammond M."/>
            <person name="Hannick L.I."/>
            <person name="Hogan J.R."/>
            <person name="Holmes M.H."/>
            <person name="Jaffe D."/>
            <person name="Johnston S.J."/>
            <person name="Kennedy R.C."/>
            <person name="Koo H."/>
            <person name="Kravitz S."/>
            <person name="Kriventseva E.V."/>
            <person name="Kulp D."/>
            <person name="Labutti K."/>
            <person name="Lee E."/>
            <person name="Li S."/>
            <person name="Lovin D.D."/>
            <person name="Mao C."/>
            <person name="Mauceli E."/>
            <person name="Menck C.F."/>
            <person name="Miller J.R."/>
            <person name="Montgomery P."/>
            <person name="Mori A."/>
            <person name="Nascimento A.L."/>
            <person name="Naveira H.F."/>
            <person name="Nusbaum C."/>
            <person name="O'Leary S.B."/>
            <person name="Orvis J."/>
            <person name="Pertea M."/>
            <person name="Quesneville H."/>
            <person name="Reidenbach K.R."/>
            <person name="Rogers Y.-H.C."/>
            <person name="Roth C.W."/>
            <person name="Schneider J.R."/>
            <person name="Schatz M."/>
            <person name="Shumway M."/>
            <person name="Stanke M."/>
            <person name="Stinson E.O."/>
            <person name="Tubio J.M.C."/>
            <person name="Vanzee J.P."/>
            <person name="Verjovski-Almeida S."/>
            <person name="Werner D."/>
            <person name="White O.R."/>
            <person name="Wyder S."/>
            <person name="Zeng Q."/>
            <person name="Zhao Q."/>
            <person name="Zhao Y."/>
            <person name="Hill C.A."/>
            <person name="Raikhel A.S."/>
            <person name="Soares M.B."/>
            <person name="Knudson D.L."/>
            <person name="Lee N.H."/>
            <person name="Galagan J."/>
            <person name="Salzberg S.L."/>
            <person name="Paulsen I.T."/>
            <person name="Dimopoulos G."/>
            <person name="Collins F.H."/>
            <person name="Bruce B."/>
            <person name="Fraser-Liggett C.M."/>
            <person name="Severson D.W."/>
        </authorList>
    </citation>
    <scope>NUCLEOTIDE SEQUENCE [LARGE SCALE GENOMIC DNA]</scope>
    <source>
        <strain>LVPib12</strain>
    </source>
</reference>
<name>RETM_AEDAE</name>
<sequence length="646" mass="74377">MVQKYESPVRIYKYPFELVMAAYERRFPTCPQMPIVLDCEIIDDAETDNGAKRETKRRCKLAVDAPYLFKKIIGIDVAYFIQTNFLDLKTRTLNIEAINETFSSRIEIFEKCRYYAHPENPDWTCFDQVATLDIKNFFGFEHSMEKMGMKQYSQTTQKGKEIIEYFINELKKEGISHVDRWKEDETTEPAATATTTVSISSEKPPLTRDNSILDADYIATYLGQLSPLQESKLVQFRKKIEETNHEGKVPDYQTLLRFLRARDFSIEKAASMLQESLQWREEHRIDDILGEYKTPVVVEKYFPGGWHHHDKDGRPLYILRLGNMDVKGLLKSVGEDELLKLTLHICEEGLKLMKEATKLFGKPIWNWCLLVDLDGLSMRHLWRPGVKALLRIIETVEKNYPETMGRVLIVRAPRVFPVLWTIVSAFIDENTRSKFLFFGGPDCLHIEDGLEHYIPTEKIPSFLGGSCITMIHEGGLIPKHLYKSESVEEHNGVPHGHEHHGLYKSVDLKPGQMFELVIKNTDPKSVLTWDIDVLKNDILFALYRTDKDLEQSFNDSFSSVFDNADMKEGVHYTRLEEKVRCKPKEGVQGSHEMATAGTYVLQWMCPPSCDGPAQLMYFHEILSSANYKGSMTSLQSGFSSNSLQSR</sequence>
<protein>
    <recommendedName>
        <fullName>Protein real-time</fullName>
    </recommendedName>
</protein>
<proteinExistence type="inferred from homology"/>
<feature type="chain" id="PRO_0000312682" description="Protein real-time">
    <location>
        <begin position="1"/>
        <end position="646"/>
    </location>
</feature>
<feature type="domain" description="PRELI/MSF1" evidence="4">
    <location>
        <begin position="2"/>
        <end position="175"/>
    </location>
</feature>
<feature type="domain" description="CRAL-TRIO" evidence="3">
    <location>
        <begin position="294"/>
        <end position="471"/>
    </location>
</feature>
<feature type="domain" description="GOLD" evidence="2">
    <location>
        <begin position="499"/>
        <end position="646"/>
    </location>
</feature>
<keyword id="KW-0496">Mitochondrion</keyword>
<keyword id="KW-1185">Reference proteome</keyword>
<dbReference type="EMBL" id="CH477949">
    <property type="protein sequence ID" value="EAT34866.1"/>
    <property type="molecule type" value="Genomic_DNA"/>
</dbReference>
<dbReference type="RefSeq" id="XP_001663116.1">
    <property type="nucleotide sequence ID" value="XM_001663066.1"/>
</dbReference>
<dbReference type="SMR" id="Q16KN5"/>
<dbReference type="FunCoup" id="Q16KN5">
    <property type="interactions" value="1314"/>
</dbReference>
<dbReference type="STRING" id="7159.Q16KN5"/>
<dbReference type="PaxDb" id="7159-AAEL012929-PA"/>
<dbReference type="EnsemblMetazoa" id="AAEL012929-RA">
    <property type="protein sequence ID" value="AAEL012929-PA"/>
    <property type="gene ID" value="AAEL012929"/>
</dbReference>
<dbReference type="VEuPathDB" id="VectorBase:AAEL012929"/>
<dbReference type="eggNOG" id="KOG1471">
    <property type="taxonomic scope" value="Eukaryota"/>
</dbReference>
<dbReference type="HOGENOM" id="CLU_023840_0_0_1"/>
<dbReference type="InParanoid" id="Q16KN5"/>
<dbReference type="OMA" id="AEWTCFD"/>
<dbReference type="PhylomeDB" id="Q16KN5"/>
<dbReference type="Proteomes" id="UP000008820">
    <property type="component" value="Chromosome 2"/>
</dbReference>
<dbReference type="Proteomes" id="UP000682892">
    <property type="component" value="Unassembled WGS sequence"/>
</dbReference>
<dbReference type="GO" id="GO:0005739">
    <property type="term" value="C:mitochondrion"/>
    <property type="evidence" value="ECO:0000250"/>
    <property type="project" value="UniProtKB"/>
</dbReference>
<dbReference type="CDD" id="cd00170">
    <property type="entry name" value="SEC14"/>
    <property type="match status" value="1"/>
</dbReference>
<dbReference type="FunFam" id="2.60.120.680:FF:000009">
    <property type="entry name" value="Blast:Protein real-time"/>
    <property type="match status" value="1"/>
</dbReference>
<dbReference type="FunFam" id="3.40.525.10:FF:000006">
    <property type="entry name" value="SEC14-like lipid binding 1"/>
    <property type="match status" value="1"/>
</dbReference>
<dbReference type="Gene3D" id="3.40.525.10">
    <property type="entry name" value="CRAL-TRIO lipid binding domain"/>
    <property type="match status" value="1"/>
</dbReference>
<dbReference type="Gene3D" id="2.60.120.680">
    <property type="entry name" value="GOLD domain"/>
    <property type="match status" value="1"/>
</dbReference>
<dbReference type="InterPro" id="IPR001251">
    <property type="entry name" value="CRAL-TRIO_dom"/>
</dbReference>
<dbReference type="InterPro" id="IPR036865">
    <property type="entry name" value="CRAL-TRIO_dom_sf"/>
</dbReference>
<dbReference type="InterPro" id="IPR011074">
    <property type="entry name" value="CRAL/TRIO_N_dom"/>
</dbReference>
<dbReference type="InterPro" id="IPR036273">
    <property type="entry name" value="CRAL/TRIO_N_dom_sf"/>
</dbReference>
<dbReference type="InterPro" id="IPR036598">
    <property type="entry name" value="GOLD_dom_sf"/>
</dbReference>
<dbReference type="InterPro" id="IPR006797">
    <property type="entry name" value="PRELI/MSF1_dom"/>
</dbReference>
<dbReference type="InterPro" id="IPR051064">
    <property type="entry name" value="SEC14/CRAL-TRIO_domain"/>
</dbReference>
<dbReference type="PANTHER" id="PTHR23324:SF66">
    <property type="entry name" value="PROTEIN REAL-TIME"/>
    <property type="match status" value="1"/>
</dbReference>
<dbReference type="PANTHER" id="PTHR23324">
    <property type="entry name" value="SEC14 RELATED PROTEIN"/>
    <property type="match status" value="1"/>
</dbReference>
<dbReference type="Pfam" id="PF00650">
    <property type="entry name" value="CRAL_TRIO"/>
    <property type="match status" value="1"/>
</dbReference>
<dbReference type="Pfam" id="PF03765">
    <property type="entry name" value="CRAL_TRIO_N"/>
    <property type="match status" value="1"/>
</dbReference>
<dbReference type="Pfam" id="PF04707">
    <property type="entry name" value="PRELI"/>
    <property type="match status" value="1"/>
</dbReference>
<dbReference type="SMART" id="SM01100">
    <property type="entry name" value="CRAL_TRIO_N"/>
    <property type="match status" value="1"/>
</dbReference>
<dbReference type="SMART" id="SM00516">
    <property type="entry name" value="SEC14"/>
    <property type="match status" value="1"/>
</dbReference>
<dbReference type="SUPFAM" id="SSF52087">
    <property type="entry name" value="CRAL/TRIO domain"/>
    <property type="match status" value="1"/>
</dbReference>
<dbReference type="SUPFAM" id="SSF46938">
    <property type="entry name" value="CRAL/TRIO N-terminal domain"/>
    <property type="match status" value="1"/>
</dbReference>
<dbReference type="SUPFAM" id="SSF101576">
    <property type="entry name" value="Supernatant protein factor (SPF), C-terminal domain"/>
    <property type="match status" value="1"/>
</dbReference>
<dbReference type="PROSITE" id="PS50191">
    <property type="entry name" value="CRAL_TRIO"/>
    <property type="match status" value="1"/>
</dbReference>
<dbReference type="PROSITE" id="PS50904">
    <property type="entry name" value="PRELI_MSF1"/>
    <property type="match status" value="1"/>
</dbReference>
<organism>
    <name type="scientific">Aedes aegypti</name>
    <name type="common">Yellowfever mosquito</name>
    <name type="synonym">Culex aegypti</name>
    <dbReference type="NCBI Taxonomy" id="7159"/>
    <lineage>
        <taxon>Eukaryota</taxon>
        <taxon>Metazoa</taxon>
        <taxon>Ecdysozoa</taxon>
        <taxon>Arthropoda</taxon>
        <taxon>Hexapoda</taxon>
        <taxon>Insecta</taxon>
        <taxon>Pterygota</taxon>
        <taxon>Neoptera</taxon>
        <taxon>Endopterygota</taxon>
        <taxon>Diptera</taxon>
        <taxon>Nematocera</taxon>
        <taxon>Culicoidea</taxon>
        <taxon>Culicidae</taxon>
        <taxon>Culicinae</taxon>
        <taxon>Aedini</taxon>
        <taxon>Aedes</taxon>
        <taxon>Stegomyia</taxon>
    </lineage>
</organism>
<evidence type="ECO:0000250" key="1">
    <source>
        <dbReference type="UniProtKB" id="Q9VMD6"/>
    </source>
</evidence>
<evidence type="ECO:0000255" key="2"/>
<evidence type="ECO:0000255" key="3">
    <source>
        <dbReference type="PROSITE-ProRule" id="PRU00056"/>
    </source>
</evidence>
<evidence type="ECO:0000255" key="4">
    <source>
        <dbReference type="PROSITE-ProRule" id="PRU00158"/>
    </source>
</evidence>
<evidence type="ECO:0000312" key="5">
    <source>
        <dbReference type="EMBL" id="EAT34866.1"/>
    </source>
</evidence>
<gene>
    <name evidence="1" type="primary">retm</name>
    <name type="ORF">AAEL012929</name>
</gene>
<accession>Q16KN5</accession>